<name>RL24_CERS5</name>
<sequence>MAAKLKKGDRVVVLAGKDKGKQGEITSVMPKDNKAVVEGVNIAIRHAKQTPTSQGGRIAKAMPIDLSNLALLDANGKATRVGFRFEGEKKVRYAKTTGDVI</sequence>
<feature type="chain" id="PRO_1000052293" description="Large ribosomal subunit protein uL24">
    <location>
        <begin position="1"/>
        <end position="101"/>
    </location>
</feature>
<comment type="function">
    <text evidence="1">One of two assembly initiator proteins, it binds directly to the 5'-end of the 23S rRNA, where it nucleates assembly of the 50S subunit.</text>
</comment>
<comment type="function">
    <text evidence="1">One of the proteins that surrounds the polypeptide exit tunnel on the outside of the subunit.</text>
</comment>
<comment type="subunit">
    <text evidence="1">Part of the 50S ribosomal subunit.</text>
</comment>
<comment type="similarity">
    <text evidence="1">Belongs to the universal ribosomal protein uL24 family.</text>
</comment>
<protein>
    <recommendedName>
        <fullName evidence="1">Large ribosomal subunit protein uL24</fullName>
    </recommendedName>
    <alternativeName>
        <fullName evidence="2">50S ribosomal protein L24</fullName>
    </alternativeName>
</protein>
<proteinExistence type="inferred from homology"/>
<dbReference type="EMBL" id="CP000661">
    <property type="protein sequence ID" value="ABP71411.1"/>
    <property type="molecule type" value="Genomic_DNA"/>
</dbReference>
<dbReference type="SMR" id="A4WVJ7"/>
<dbReference type="STRING" id="349102.Rsph17025_2523"/>
<dbReference type="KEGG" id="rsq:Rsph17025_2523"/>
<dbReference type="eggNOG" id="COG0198">
    <property type="taxonomic scope" value="Bacteria"/>
</dbReference>
<dbReference type="HOGENOM" id="CLU_093315_2_2_5"/>
<dbReference type="BioCyc" id="RSPH349102:G1G8M-2601-MONOMER"/>
<dbReference type="GO" id="GO:1990904">
    <property type="term" value="C:ribonucleoprotein complex"/>
    <property type="evidence" value="ECO:0007669"/>
    <property type="project" value="UniProtKB-KW"/>
</dbReference>
<dbReference type="GO" id="GO:0005840">
    <property type="term" value="C:ribosome"/>
    <property type="evidence" value="ECO:0007669"/>
    <property type="project" value="UniProtKB-KW"/>
</dbReference>
<dbReference type="GO" id="GO:0019843">
    <property type="term" value="F:rRNA binding"/>
    <property type="evidence" value="ECO:0007669"/>
    <property type="project" value="UniProtKB-UniRule"/>
</dbReference>
<dbReference type="GO" id="GO:0003735">
    <property type="term" value="F:structural constituent of ribosome"/>
    <property type="evidence" value="ECO:0007669"/>
    <property type="project" value="InterPro"/>
</dbReference>
<dbReference type="GO" id="GO:0006412">
    <property type="term" value="P:translation"/>
    <property type="evidence" value="ECO:0007669"/>
    <property type="project" value="UniProtKB-UniRule"/>
</dbReference>
<dbReference type="CDD" id="cd06089">
    <property type="entry name" value="KOW_RPL26"/>
    <property type="match status" value="1"/>
</dbReference>
<dbReference type="Gene3D" id="2.30.30.30">
    <property type="match status" value="1"/>
</dbReference>
<dbReference type="HAMAP" id="MF_01326_B">
    <property type="entry name" value="Ribosomal_uL24_B"/>
    <property type="match status" value="1"/>
</dbReference>
<dbReference type="InterPro" id="IPR005824">
    <property type="entry name" value="KOW"/>
</dbReference>
<dbReference type="InterPro" id="IPR014722">
    <property type="entry name" value="Rib_uL2_dom2"/>
</dbReference>
<dbReference type="InterPro" id="IPR003256">
    <property type="entry name" value="Ribosomal_uL24"/>
</dbReference>
<dbReference type="InterPro" id="IPR005825">
    <property type="entry name" value="Ribosomal_uL24_CS"/>
</dbReference>
<dbReference type="InterPro" id="IPR041988">
    <property type="entry name" value="Ribosomal_uL24_KOW"/>
</dbReference>
<dbReference type="InterPro" id="IPR008991">
    <property type="entry name" value="Translation_prot_SH3-like_sf"/>
</dbReference>
<dbReference type="NCBIfam" id="TIGR01079">
    <property type="entry name" value="rplX_bact"/>
    <property type="match status" value="1"/>
</dbReference>
<dbReference type="PANTHER" id="PTHR12903">
    <property type="entry name" value="MITOCHONDRIAL RIBOSOMAL PROTEIN L24"/>
    <property type="match status" value="1"/>
</dbReference>
<dbReference type="Pfam" id="PF00467">
    <property type="entry name" value="KOW"/>
    <property type="match status" value="1"/>
</dbReference>
<dbReference type="Pfam" id="PF17136">
    <property type="entry name" value="ribosomal_L24"/>
    <property type="match status" value="1"/>
</dbReference>
<dbReference type="SMART" id="SM00739">
    <property type="entry name" value="KOW"/>
    <property type="match status" value="1"/>
</dbReference>
<dbReference type="SUPFAM" id="SSF50104">
    <property type="entry name" value="Translation proteins SH3-like domain"/>
    <property type="match status" value="1"/>
</dbReference>
<dbReference type="PROSITE" id="PS01108">
    <property type="entry name" value="RIBOSOMAL_L24"/>
    <property type="match status" value="1"/>
</dbReference>
<evidence type="ECO:0000255" key="1">
    <source>
        <dbReference type="HAMAP-Rule" id="MF_01326"/>
    </source>
</evidence>
<evidence type="ECO:0000305" key="2"/>
<gene>
    <name evidence="1" type="primary">rplX</name>
    <name type="ordered locus">Rsph17025_2523</name>
</gene>
<reference key="1">
    <citation type="submission" date="2007-04" db="EMBL/GenBank/DDBJ databases">
        <title>Complete sequence of chromosome of Rhodobacter sphaeroides ATCC 17025.</title>
        <authorList>
            <consortium name="US DOE Joint Genome Institute"/>
            <person name="Copeland A."/>
            <person name="Lucas S."/>
            <person name="Lapidus A."/>
            <person name="Barry K."/>
            <person name="Detter J.C."/>
            <person name="Glavina del Rio T."/>
            <person name="Hammon N."/>
            <person name="Israni S."/>
            <person name="Dalin E."/>
            <person name="Tice H."/>
            <person name="Pitluck S."/>
            <person name="Chertkov O."/>
            <person name="Brettin T."/>
            <person name="Bruce D."/>
            <person name="Han C."/>
            <person name="Schmutz J."/>
            <person name="Larimer F."/>
            <person name="Land M."/>
            <person name="Hauser L."/>
            <person name="Kyrpides N."/>
            <person name="Kim E."/>
            <person name="Richardson P."/>
            <person name="Mackenzie C."/>
            <person name="Choudhary M."/>
            <person name="Donohue T.J."/>
            <person name="Kaplan S."/>
        </authorList>
    </citation>
    <scope>NUCLEOTIDE SEQUENCE [LARGE SCALE GENOMIC DNA]</scope>
    <source>
        <strain>ATCC 17025 / ATH 2.4.3</strain>
    </source>
</reference>
<accession>A4WVJ7</accession>
<organism>
    <name type="scientific">Cereibacter sphaeroides (strain ATCC 17025 / ATH 2.4.3)</name>
    <name type="common">Rhodobacter sphaeroides</name>
    <dbReference type="NCBI Taxonomy" id="349102"/>
    <lineage>
        <taxon>Bacteria</taxon>
        <taxon>Pseudomonadati</taxon>
        <taxon>Pseudomonadota</taxon>
        <taxon>Alphaproteobacteria</taxon>
        <taxon>Rhodobacterales</taxon>
        <taxon>Paracoccaceae</taxon>
        <taxon>Cereibacter</taxon>
    </lineage>
</organism>
<keyword id="KW-0687">Ribonucleoprotein</keyword>
<keyword id="KW-0689">Ribosomal protein</keyword>
<keyword id="KW-0694">RNA-binding</keyword>
<keyword id="KW-0699">rRNA-binding</keyword>